<organism>
    <name type="scientific">Escherichia coli (strain UTI89 / UPEC)</name>
    <dbReference type="NCBI Taxonomy" id="364106"/>
    <lineage>
        <taxon>Bacteria</taxon>
        <taxon>Pseudomonadati</taxon>
        <taxon>Pseudomonadota</taxon>
        <taxon>Gammaproteobacteria</taxon>
        <taxon>Enterobacterales</taxon>
        <taxon>Enterobacteriaceae</taxon>
        <taxon>Escherichia</taxon>
    </lineage>
</organism>
<protein>
    <recommendedName>
        <fullName evidence="2">Exoribonuclease 2</fullName>
        <ecNumber evidence="2">3.1.13.1</ecNumber>
    </recommendedName>
    <alternativeName>
        <fullName evidence="2">Exoribonuclease II</fullName>
        <shortName evidence="2">RNase II</shortName>
        <shortName evidence="2">Ribonuclease II</shortName>
    </alternativeName>
</protein>
<accession>Q1RC77</accession>
<evidence type="ECO:0000255" key="1"/>
<evidence type="ECO:0000255" key="2">
    <source>
        <dbReference type="HAMAP-Rule" id="MF_01036"/>
    </source>
</evidence>
<comment type="function">
    <text evidence="2">Involved in mRNA degradation. Hydrolyzes single-stranded polyribonucleotides processively in the 3' to 5' direction.</text>
</comment>
<comment type="catalytic activity">
    <reaction evidence="2">
        <text>Exonucleolytic cleavage in the 3'- to 5'-direction to yield nucleoside 5'-phosphates.</text>
        <dbReference type="EC" id="3.1.13.1"/>
    </reaction>
</comment>
<comment type="subcellular location">
    <subcellularLocation>
        <location evidence="2">Cytoplasm</location>
    </subcellularLocation>
</comment>
<comment type="similarity">
    <text evidence="2">Belongs to the RNR ribonuclease family. RNase II subfamily.</text>
</comment>
<dbReference type="EC" id="3.1.13.1" evidence="2"/>
<dbReference type="EMBL" id="CP000243">
    <property type="protein sequence ID" value="ABE07037.1"/>
    <property type="molecule type" value="Genomic_DNA"/>
</dbReference>
<dbReference type="RefSeq" id="WP_000485005.1">
    <property type="nucleotide sequence ID" value="NZ_CP064825.1"/>
</dbReference>
<dbReference type="SMR" id="Q1RC77"/>
<dbReference type="KEGG" id="eci:UTI89_C1559"/>
<dbReference type="HOGENOM" id="CLU_002333_7_3_6"/>
<dbReference type="Proteomes" id="UP000001952">
    <property type="component" value="Chromosome"/>
</dbReference>
<dbReference type="GO" id="GO:0005829">
    <property type="term" value="C:cytosol"/>
    <property type="evidence" value="ECO:0007669"/>
    <property type="project" value="UniProtKB-ARBA"/>
</dbReference>
<dbReference type="GO" id="GO:0008859">
    <property type="term" value="F:exoribonuclease II activity"/>
    <property type="evidence" value="ECO:0007669"/>
    <property type="project" value="UniProtKB-UniRule"/>
</dbReference>
<dbReference type="GO" id="GO:0003723">
    <property type="term" value="F:RNA binding"/>
    <property type="evidence" value="ECO:0007669"/>
    <property type="project" value="UniProtKB-KW"/>
</dbReference>
<dbReference type="GO" id="GO:0006402">
    <property type="term" value="P:mRNA catabolic process"/>
    <property type="evidence" value="ECO:0007669"/>
    <property type="project" value="UniProtKB-UniRule"/>
</dbReference>
<dbReference type="FunFam" id="2.40.50.140:FF:000079">
    <property type="entry name" value="Exoribonuclease 2"/>
    <property type="match status" value="1"/>
</dbReference>
<dbReference type="FunFam" id="2.40.50.140:FF:000081">
    <property type="entry name" value="Exoribonuclease 2"/>
    <property type="match status" value="1"/>
</dbReference>
<dbReference type="FunFam" id="2.40.50.640:FF:000001">
    <property type="entry name" value="Exoribonuclease 2"/>
    <property type="match status" value="1"/>
</dbReference>
<dbReference type="Gene3D" id="2.40.50.640">
    <property type="match status" value="1"/>
</dbReference>
<dbReference type="Gene3D" id="2.40.50.140">
    <property type="entry name" value="Nucleic acid-binding proteins"/>
    <property type="match status" value="2"/>
</dbReference>
<dbReference type="HAMAP" id="MF_01036">
    <property type="entry name" value="RNase_II"/>
    <property type="match status" value="1"/>
</dbReference>
<dbReference type="InterPro" id="IPR011129">
    <property type="entry name" value="CSD"/>
</dbReference>
<dbReference type="InterPro" id="IPR012340">
    <property type="entry name" value="NA-bd_OB-fold"/>
</dbReference>
<dbReference type="InterPro" id="IPR013223">
    <property type="entry name" value="RNase_B_OB_dom"/>
</dbReference>
<dbReference type="InterPro" id="IPR011804">
    <property type="entry name" value="RNase_II"/>
</dbReference>
<dbReference type="InterPro" id="IPR001900">
    <property type="entry name" value="RNase_II/R"/>
</dbReference>
<dbReference type="InterPro" id="IPR022966">
    <property type="entry name" value="RNase_II/R_CS"/>
</dbReference>
<dbReference type="InterPro" id="IPR004476">
    <property type="entry name" value="RNase_II/RNase_R"/>
</dbReference>
<dbReference type="InterPro" id="IPR050180">
    <property type="entry name" value="RNR_Ribonuclease"/>
</dbReference>
<dbReference type="InterPro" id="IPR003029">
    <property type="entry name" value="S1_domain"/>
</dbReference>
<dbReference type="NCBIfam" id="TIGR00358">
    <property type="entry name" value="3_prime_RNase"/>
    <property type="match status" value="1"/>
</dbReference>
<dbReference type="NCBIfam" id="NF003455">
    <property type="entry name" value="PRK05054.1"/>
    <property type="match status" value="1"/>
</dbReference>
<dbReference type="NCBIfam" id="TIGR02062">
    <property type="entry name" value="RNase_B"/>
    <property type="match status" value="1"/>
</dbReference>
<dbReference type="PANTHER" id="PTHR23355:SF37">
    <property type="entry name" value="EXORIBONUCLEASE 2"/>
    <property type="match status" value="1"/>
</dbReference>
<dbReference type="PANTHER" id="PTHR23355">
    <property type="entry name" value="RIBONUCLEASE"/>
    <property type="match status" value="1"/>
</dbReference>
<dbReference type="Pfam" id="PF08206">
    <property type="entry name" value="OB_RNB"/>
    <property type="match status" value="1"/>
</dbReference>
<dbReference type="Pfam" id="PF00773">
    <property type="entry name" value="RNB"/>
    <property type="match status" value="1"/>
</dbReference>
<dbReference type="Pfam" id="PF00575">
    <property type="entry name" value="S1"/>
    <property type="match status" value="1"/>
</dbReference>
<dbReference type="SMART" id="SM00357">
    <property type="entry name" value="CSP"/>
    <property type="match status" value="1"/>
</dbReference>
<dbReference type="SMART" id="SM00955">
    <property type="entry name" value="RNB"/>
    <property type="match status" value="1"/>
</dbReference>
<dbReference type="SUPFAM" id="SSF50249">
    <property type="entry name" value="Nucleic acid-binding proteins"/>
    <property type="match status" value="4"/>
</dbReference>
<dbReference type="PROSITE" id="PS01175">
    <property type="entry name" value="RIBONUCLEASE_II"/>
    <property type="match status" value="1"/>
</dbReference>
<gene>
    <name evidence="2" type="primary">rnb</name>
    <name type="ordered locus">UTI89_C1559</name>
</gene>
<feature type="chain" id="PRO_1000063887" description="Exoribonuclease 2">
    <location>
        <begin position="1"/>
        <end position="644"/>
    </location>
</feature>
<feature type="domain" description="RNB" evidence="1">
    <location>
        <begin position="189"/>
        <end position="516"/>
    </location>
</feature>
<feature type="domain" description="S1 motif" evidence="2">
    <location>
        <begin position="561"/>
        <end position="643"/>
    </location>
</feature>
<name>RNB_ECOUT</name>
<keyword id="KW-0963">Cytoplasm</keyword>
<keyword id="KW-0269">Exonuclease</keyword>
<keyword id="KW-0378">Hydrolase</keyword>
<keyword id="KW-0540">Nuclease</keyword>
<keyword id="KW-0694">RNA-binding</keyword>
<reference key="1">
    <citation type="journal article" date="2006" name="Proc. Natl. Acad. Sci. U.S.A.">
        <title>Identification of genes subject to positive selection in uropathogenic strains of Escherichia coli: a comparative genomics approach.</title>
        <authorList>
            <person name="Chen S.L."/>
            <person name="Hung C.-S."/>
            <person name="Xu J."/>
            <person name="Reigstad C.S."/>
            <person name="Magrini V."/>
            <person name="Sabo A."/>
            <person name="Blasiar D."/>
            <person name="Bieri T."/>
            <person name="Meyer R.R."/>
            <person name="Ozersky P."/>
            <person name="Armstrong J.R."/>
            <person name="Fulton R.S."/>
            <person name="Latreille J.P."/>
            <person name="Spieth J."/>
            <person name="Hooton T.M."/>
            <person name="Mardis E.R."/>
            <person name="Hultgren S.J."/>
            <person name="Gordon J.I."/>
        </authorList>
    </citation>
    <scope>NUCLEOTIDE SEQUENCE [LARGE SCALE GENOMIC DNA]</scope>
    <source>
        <strain>UTI89 / UPEC</strain>
    </source>
</reference>
<proteinExistence type="inferred from homology"/>
<sequence length="644" mass="72485">MFQDNPLLAQLKQQLHSQTPRAEGVVKATEKGFGFLEVDAQKSYFIPPPQMKKVMHGDRIIAVIHSEKERESAEPEELVEPFLTRFVGKVQGKNDRLAIVPDHPLLKDAIPCRAARGLNHEFKEGDWAVAEMRRHPLKGDRSFYAELTQYITFGDDHFVPWWVTLARHNLEKEAPDGVATEMLDEGLVREDLTALDFVTIDSASTEDMDDALFAKALPDGKLQLIVAIADPTAWIAEGSKLDKAAKIRAFTNYLPGFNIPMLPRELSDDLCSLRANEVRPVLACRMTFSTDGTIEDNIEFFAATIESKAKLVYDQVSDWLENTGDWQPESEAIAEQVRLLAQICQRRGEWRHNHALVFKDRLDYRFILGEKGEVLDIVAEPRRIANRIVEEAMIAANICAARVLRDKLGFGIYNVHMGFDPANADALAALLKTHGLHVDAEEVLTLDGFCKLRRELDAQPTGFLDSRIRRFQSFAEISTEPGPHFGLGLEAYATWTSPIRKYGDMINHRLLKAVIKGETATRPQDEITVQMAERRRLNRMAERDVGDWLYARFLKDKAGTDTRFAAEIVDISRGGMRVRLVDNGAIAFIPAPFLHAVRDELVCSQENGTVQIKGETAYKVTDVIDVTIAEVRMETRSIIARPVA</sequence>